<gene>
    <name evidence="1" type="primary">der</name>
    <name type="synonym">engA</name>
    <name type="ordered locus">CTA_0764</name>
</gene>
<organism>
    <name type="scientific">Chlamydia trachomatis serovar A (strain ATCC VR-571B / DSM 19440 / HAR-13)</name>
    <dbReference type="NCBI Taxonomy" id="315277"/>
    <lineage>
        <taxon>Bacteria</taxon>
        <taxon>Pseudomonadati</taxon>
        <taxon>Chlamydiota</taxon>
        <taxon>Chlamydiia</taxon>
        <taxon>Chlamydiales</taxon>
        <taxon>Chlamydiaceae</taxon>
        <taxon>Chlamydia/Chlamydophila group</taxon>
        <taxon>Chlamydia</taxon>
    </lineage>
</organism>
<proteinExistence type="inferred from homology"/>
<name>DER_CHLTA</name>
<dbReference type="EMBL" id="CP000051">
    <property type="protein sequence ID" value="AAX50981.1"/>
    <property type="molecule type" value="Genomic_DNA"/>
</dbReference>
<dbReference type="RefSeq" id="WP_011324840.1">
    <property type="nucleotide sequence ID" value="NC_007429.1"/>
</dbReference>
<dbReference type="SMR" id="Q3KKZ1"/>
<dbReference type="KEGG" id="cta:CTA_0764"/>
<dbReference type="HOGENOM" id="CLU_016077_6_2_0"/>
<dbReference type="Proteomes" id="UP000002532">
    <property type="component" value="Chromosome"/>
</dbReference>
<dbReference type="GO" id="GO:0005525">
    <property type="term" value="F:GTP binding"/>
    <property type="evidence" value="ECO:0007669"/>
    <property type="project" value="UniProtKB-UniRule"/>
</dbReference>
<dbReference type="GO" id="GO:0043022">
    <property type="term" value="F:ribosome binding"/>
    <property type="evidence" value="ECO:0007669"/>
    <property type="project" value="TreeGrafter"/>
</dbReference>
<dbReference type="GO" id="GO:0042254">
    <property type="term" value="P:ribosome biogenesis"/>
    <property type="evidence" value="ECO:0007669"/>
    <property type="project" value="UniProtKB-KW"/>
</dbReference>
<dbReference type="CDD" id="cd01894">
    <property type="entry name" value="EngA1"/>
    <property type="match status" value="1"/>
</dbReference>
<dbReference type="CDD" id="cd01895">
    <property type="entry name" value="EngA2"/>
    <property type="match status" value="1"/>
</dbReference>
<dbReference type="FunFam" id="3.40.50.300:FF:000040">
    <property type="entry name" value="GTPase Der"/>
    <property type="match status" value="1"/>
</dbReference>
<dbReference type="Gene3D" id="3.30.300.20">
    <property type="match status" value="1"/>
</dbReference>
<dbReference type="Gene3D" id="3.40.50.300">
    <property type="entry name" value="P-loop containing nucleotide triphosphate hydrolases"/>
    <property type="match status" value="2"/>
</dbReference>
<dbReference type="HAMAP" id="MF_00195">
    <property type="entry name" value="GTPase_Der"/>
    <property type="match status" value="1"/>
</dbReference>
<dbReference type="InterPro" id="IPR031166">
    <property type="entry name" value="G_ENGA"/>
</dbReference>
<dbReference type="InterPro" id="IPR006073">
    <property type="entry name" value="GTP-bd"/>
</dbReference>
<dbReference type="InterPro" id="IPR016484">
    <property type="entry name" value="GTPase_Der"/>
</dbReference>
<dbReference type="InterPro" id="IPR032859">
    <property type="entry name" value="KH_dom-like"/>
</dbReference>
<dbReference type="InterPro" id="IPR015946">
    <property type="entry name" value="KH_dom-like_a/b"/>
</dbReference>
<dbReference type="InterPro" id="IPR027417">
    <property type="entry name" value="P-loop_NTPase"/>
</dbReference>
<dbReference type="InterPro" id="IPR005225">
    <property type="entry name" value="Small_GTP-bd"/>
</dbReference>
<dbReference type="NCBIfam" id="TIGR03594">
    <property type="entry name" value="GTPase_EngA"/>
    <property type="match status" value="1"/>
</dbReference>
<dbReference type="NCBIfam" id="TIGR00231">
    <property type="entry name" value="small_GTP"/>
    <property type="match status" value="2"/>
</dbReference>
<dbReference type="PANTHER" id="PTHR43834">
    <property type="entry name" value="GTPASE DER"/>
    <property type="match status" value="1"/>
</dbReference>
<dbReference type="PANTHER" id="PTHR43834:SF6">
    <property type="entry name" value="GTPASE DER"/>
    <property type="match status" value="1"/>
</dbReference>
<dbReference type="Pfam" id="PF14714">
    <property type="entry name" value="KH_dom-like"/>
    <property type="match status" value="1"/>
</dbReference>
<dbReference type="Pfam" id="PF01926">
    <property type="entry name" value="MMR_HSR1"/>
    <property type="match status" value="2"/>
</dbReference>
<dbReference type="PIRSF" id="PIRSF006485">
    <property type="entry name" value="GTP-binding_EngA"/>
    <property type="match status" value="1"/>
</dbReference>
<dbReference type="PRINTS" id="PR00326">
    <property type="entry name" value="GTP1OBG"/>
</dbReference>
<dbReference type="SUPFAM" id="SSF52540">
    <property type="entry name" value="P-loop containing nucleoside triphosphate hydrolases"/>
    <property type="match status" value="1"/>
</dbReference>
<dbReference type="SUPFAM" id="SSF82653">
    <property type="entry name" value="Probable GTPase Der, C-terminal domain"/>
    <property type="match status" value="1"/>
</dbReference>
<dbReference type="PROSITE" id="PS51712">
    <property type="entry name" value="G_ENGA"/>
    <property type="match status" value="2"/>
</dbReference>
<accession>Q3KKZ1</accession>
<reference key="1">
    <citation type="journal article" date="2005" name="Infect. Immun.">
        <title>Comparative genomic analysis of Chlamydia trachomatis oculotropic and genitotropic strains.</title>
        <authorList>
            <person name="Carlson J.H."/>
            <person name="Porcella S.F."/>
            <person name="McClarty G."/>
            <person name="Caldwell H.D."/>
        </authorList>
    </citation>
    <scope>NUCLEOTIDE SEQUENCE [LARGE SCALE GENOMIC DNA]</scope>
    <source>
        <strain>ATCC VR-571B / DSM 19440 / HAR-13</strain>
    </source>
</reference>
<evidence type="ECO:0000255" key="1">
    <source>
        <dbReference type="HAMAP-Rule" id="MF_00195"/>
    </source>
</evidence>
<sequence>MRIAILGRPNVGKSSLFNRLCKRSLAIVNSQEGTTRDRLYGEIRAWDSIIHVIDTGGVDQESTDRFQKQIHQQALAAAEEASVLLLVVDIRCGITKQDEELAKRLLPLKKPLILVMNKADSQQDLQRIHEFYGLGISDMIATSASHDKHIDLLLERIRQIAQIPVPSVEEQDAVQEDELPSEEAAISLHAFADETLFENESLSQEEASFLEELVAQTATPAPVDRPLKVALIGHPNVGKSSIINALLKEERCITDNSPGTTRDNIDVAYTHNNKEYVFIDTAGLRKTKSIKNSVEWMSSSRTEKAISRTDICLLVIDATQQLSYQDKRILSMIARYKKPHVILVNKWDLMFGVRMEHYVQDLRKMDPYIGQARILCISAKQRRNLLQIFSAIDDVYTIATTKLSTSLVNKVLASAMQRHHPQVINGKRLRIYYAIHKTTTPFTFLLFINSNSLLTKPYELYLKNTLKAAFNLYRVPFDLEYKAKPARKSN</sequence>
<feature type="chain" id="PRO_1000011602" description="GTPase Der">
    <location>
        <begin position="1"/>
        <end position="490"/>
    </location>
</feature>
<feature type="domain" description="EngA-type G 1">
    <location>
        <begin position="1"/>
        <end position="165"/>
    </location>
</feature>
<feature type="domain" description="EngA-type G 2">
    <location>
        <begin position="227"/>
        <end position="400"/>
    </location>
</feature>
<feature type="domain" description="KH-like" evidence="1">
    <location>
        <begin position="401"/>
        <end position="485"/>
    </location>
</feature>
<feature type="binding site" evidence="1">
    <location>
        <begin position="7"/>
        <end position="14"/>
    </location>
    <ligand>
        <name>GTP</name>
        <dbReference type="ChEBI" id="CHEBI:37565"/>
        <label>1</label>
    </ligand>
</feature>
<feature type="binding site" evidence="1">
    <location>
        <begin position="54"/>
        <end position="58"/>
    </location>
    <ligand>
        <name>GTP</name>
        <dbReference type="ChEBI" id="CHEBI:37565"/>
        <label>1</label>
    </ligand>
</feature>
<feature type="binding site" evidence="1">
    <location>
        <begin position="117"/>
        <end position="120"/>
    </location>
    <ligand>
        <name>GTP</name>
        <dbReference type="ChEBI" id="CHEBI:37565"/>
        <label>1</label>
    </ligand>
</feature>
<feature type="binding site" evidence="1">
    <location>
        <begin position="233"/>
        <end position="240"/>
    </location>
    <ligand>
        <name>GTP</name>
        <dbReference type="ChEBI" id="CHEBI:37565"/>
        <label>2</label>
    </ligand>
</feature>
<feature type="binding site" evidence="1">
    <location>
        <begin position="280"/>
        <end position="284"/>
    </location>
    <ligand>
        <name>GTP</name>
        <dbReference type="ChEBI" id="CHEBI:37565"/>
        <label>2</label>
    </ligand>
</feature>
<feature type="binding site" evidence="1">
    <location>
        <begin position="345"/>
        <end position="348"/>
    </location>
    <ligand>
        <name>GTP</name>
        <dbReference type="ChEBI" id="CHEBI:37565"/>
        <label>2</label>
    </ligand>
</feature>
<keyword id="KW-0342">GTP-binding</keyword>
<keyword id="KW-0547">Nucleotide-binding</keyword>
<keyword id="KW-0677">Repeat</keyword>
<keyword id="KW-0690">Ribosome biogenesis</keyword>
<protein>
    <recommendedName>
        <fullName evidence="1">GTPase Der</fullName>
    </recommendedName>
    <alternativeName>
        <fullName evidence="1">GTP-binding protein EngA</fullName>
    </alternativeName>
</protein>
<comment type="function">
    <text evidence="1">GTPase that plays an essential role in the late steps of ribosome biogenesis.</text>
</comment>
<comment type="subunit">
    <text evidence="1">Associates with the 50S ribosomal subunit.</text>
</comment>
<comment type="similarity">
    <text evidence="1">Belongs to the TRAFAC class TrmE-Era-EngA-EngB-Septin-like GTPase superfamily. EngA (Der) GTPase family.</text>
</comment>